<keyword id="KW-0449">Lipoprotein</keyword>
<keyword id="KW-0472">Membrane</keyword>
<keyword id="KW-1185">Reference proteome</keyword>
<keyword id="KW-0677">Repeat</keyword>
<keyword id="KW-0926">Vacuole</keyword>
<organism>
    <name type="scientific">Arabidopsis thaliana</name>
    <name type="common">Mouse-ear cress</name>
    <dbReference type="NCBI Taxonomy" id="3702"/>
    <lineage>
        <taxon>Eukaryota</taxon>
        <taxon>Viridiplantae</taxon>
        <taxon>Streptophyta</taxon>
        <taxon>Embryophyta</taxon>
        <taxon>Tracheophyta</taxon>
        <taxon>Spermatophyta</taxon>
        <taxon>Magnoliopsida</taxon>
        <taxon>eudicotyledons</taxon>
        <taxon>Gunneridae</taxon>
        <taxon>Pentapetalae</taxon>
        <taxon>rosids</taxon>
        <taxon>malvids</taxon>
        <taxon>Brassicales</taxon>
        <taxon>Brassicaceae</taxon>
        <taxon>Camelineae</taxon>
        <taxon>Arabidopsis</taxon>
    </lineage>
</organism>
<accession>Q9C5P6</accession>
<accession>O23480</accession>
<accession>Q9FVF2</accession>
<sequence length="226" mass="26029">MMMQCLDGLKHLALILLTCCDADPPKVRQNPKDVARGTVFTVNEIEALYELFKSISKNGLIDKEQFQLVLFKMNTTRSLFADRVFDLFDTKNTGILDFEAFARSLSVFHPNAKFEDKIEFSFKLYDLNQQGYIKRQEVKQMVVRTLAESGMNLSDHVIESIIDKTFEEADTKLDGKIDKEEWRSLVLRHPSLLQNMSLQHLKDVTKTFPNFVFHTIVTDTPSELDG</sequence>
<comment type="function">
    <text>Acts as a calcium sensor. CBL proteins interact with CIPK serine-threonine protein kinases. Binding of a CBL protein to the regulatory NAF domain of a CIPK protein lead to the activation of the kinase in a calcium-dependent manner.</text>
</comment>
<comment type="subunit">
    <text evidence="1">Homodimer.</text>
</comment>
<comment type="subcellular location">
    <subcellularLocation>
        <location evidence="3 4">Vacuole membrane</location>
        <topology evidence="3 4">Lipid-anchor</topology>
    </subcellularLocation>
    <text>Tonoplast localization abolished by 2-bromopalmitate (2-BP) treatment.</text>
</comment>
<comment type="PTM">
    <text>S-acylated by PAT10.</text>
</comment>
<comment type="similarity">
    <text evidence="5">Belongs to the calcineurin regulatory subunit family.</text>
</comment>
<comment type="sequence caution" evidence="5">
    <conflict type="frameshift">
        <sequence resource="EMBL-CDS" id="AAK26840"/>
    </conflict>
</comment>
<comment type="sequence caution" evidence="5">
    <conflict type="erroneous gene model prediction">
        <sequence resource="EMBL-CDS" id="CAB10412"/>
    </conflict>
</comment>
<comment type="sequence caution" evidence="5">
    <conflict type="erroneous gene model prediction">
        <sequence resource="EMBL-CDS" id="CAB78677"/>
    </conflict>
</comment>
<evidence type="ECO:0000250" key="1"/>
<evidence type="ECO:0000255" key="2">
    <source>
        <dbReference type="PROSITE-ProRule" id="PRU00448"/>
    </source>
</evidence>
<evidence type="ECO:0000269" key="3">
    <source>
    </source>
</evidence>
<evidence type="ECO:0000269" key="4">
    <source>
    </source>
</evidence>
<evidence type="ECO:0000305" key="5"/>
<gene>
    <name type="primary">CBL6</name>
    <name type="synonym">SCABP2</name>
    <name type="ordered locus">At4g16350</name>
    <name type="ORF">dl4205c</name>
    <name type="ORF">FCAALL.89</name>
</gene>
<name>CNBL6_ARATH</name>
<proteinExistence type="evidence at protein level"/>
<protein>
    <recommendedName>
        <fullName>Calcineurin B-like protein 6</fullName>
    </recommendedName>
    <alternativeName>
        <fullName>SOS3-like calcium-binding protein 2</fullName>
    </alternativeName>
</protein>
<reference key="1">
    <citation type="journal article" date="1999" name="Plant Cell">
        <title>Novel protein kinases associated with calcineurin B-like calcium sensors in Arabidopsis.</title>
        <authorList>
            <person name="Shi J."/>
            <person name="Kim K.-N."/>
            <person name="Ritz O."/>
            <person name="Albrecht V."/>
            <person name="Gupta R."/>
            <person name="Harter K."/>
            <person name="Luan S."/>
            <person name="Kudla J."/>
        </authorList>
    </citation>
    <scope>NUCLEOTIDE SEQUENCE [MRNA]</scope>
    <source>
        <strain>cv. Columbia</strain>
    </source>
</reference>
<reference key="2">
    <citation type="journal article" date="2001" name="Plant Cell">
        <title>Molecular characterization of functional domains in the protein kinase SOS2 that is required for plant salt tolerance.</title>
        <authorList>
            <person name="Guo Y."/>
            <person name="Halfter U."/>
            <person name="Ishitani M."/>
            <person name="Zhu J.-K."/>
        </authorList>
    </citation>
    <scope>NUCLEOTIDE SEQUENCE [MRNA]</scope>
    <source>
        <strain>cv. Columbia</strain>
    </source>
</reference>
<reference key="3">
    <citation type="journal article" date="1998" name="Nature">
        <title>Analysis of 1.9 Mb of contiguous sequence from chromosome 4 of Arabidopsis thaliana.</title>
        <authorList>
            <person name="Bevan M."/>
            <person name="Bancroft I."/>
            <person name="Bent E."/>
            <person name="Love K."/>
            <person name="Goodman H.M."/>
            <person name="Dean C."/>
            <person name="Bergkamp R."/>
            <person name="Dirkse W."/>
            <person name="van Staveren M."/>
            <person name="Stiekema W."/>
            <person name="Drost L."/>
            <person name="Ridley P."/>
            <person name="Hudson S.-A."/>
            <person name="Patel K."/>
            <person name="Murphy G."/>
            <person name="Piffanelli P."/>
            <person name="Wedler H."/>
            <person name="Wedler E."/>
            <person name="Wambutt R."/>
            <person name="Weitzenegger T."/>
            <person name="Pohl T."/>
            <person name="Terryn N."/>
            <person name="Gielen J."/>
            <person name="Villarroel R."/>
            <person name="De Clercq R."/>
            <person name="van Montagu M."/>
            <person name="Lecharny A."/>
            <person name="Aubourg S."/>
            <person name="Gy I."/>
            <person name="Kreis M."/>
            <person name="Lao N."/>
            <person name="Kavanagh T."/>
            <person name="Hempel S."/>
            <person name="Kotter P."/>
            <person name="Entian K.-D."/>
            <person name="Rieger M."/>
            <person name="Schaefer M."/>
            <person name="Funk B."/>
            <person name="Mueller-Auer S."/>
            <person name="Silvey M."/>
            <person name="James R."/>
            <person name="Monfort A."/>
            <person name="Pons A."/>
            <person name="Puigdomenech P."/>
            <person name="Douka A."/>
            <person name="Voukelatou E."/>
            <person name="Milioni D."/>
            <person name="Hatzopoulos P."/>
            <person name="Piravandi E."/>
            <person name="Obermaier B."/>
            <person name="Hilbert H."/>
            <person name="Duesterhoeft A."/>
            <person name="Moores T."/>
            <person name="Jones J.D.G."/>
            <person name="Eneva T."/>
            <person name="Palme K."/>
            <person name="Benes V."/>
            <person name="Rechmann S."/>
            <person name="Ansorge W."/>
            <person name="Cooke R."/>
            <person name="Berger C."/>
            <person name="Delseny M."/>
            <person name="Voet M."/>
            <person name="Volckaert G."/>
            <person name="Mewes H.-W."/>
            <person name="Klosterman S."/>
            <person name="Schueller C."/>
            <person name="Chalwatzis N."/>
        </authorList>
    </citation>
    <scope>NUCLEOTIDE SEQUENCE [LARGE SCALE GENOMIC DNA]</scope>
    <source>
        <strain>cv. Columbia</strain>
    </source>
</reference>
<reference key="4">
    <citation type="journal article" date="1999" name="Nature">
        <title>Sequence and analysis of chromosome 4 of the plant Arabidopsis thaliana.</title>
        <authorList>
            <person name="Mayer K.F.X."/>
            <person name="Schueller C."/>
            <person name="Wambutt R."/>
            <person name="Murphy G."/>
            <person name="Volckaert G."/>
            <person name="Pohl T."/>
            <person name="Duesterhoeft A."/>
            <person name="Stiekema W."/>
            <person name="Entian K.-D."/>
            <person name="Terryn N."/>
            <person name="Harris B."/>
            <person name="Ansorge W."/>
            <person name="Brandt P."/>
            <person name="Grivell L.A."/>
            <person name="Rieger M."/>
            <person name="Weichselgartner M."/>
            <person name="de Simone V."/>
            <person name="Obermaier B."/>
            <person name="Mache R."/>
            <person name="Mueller M."/>
            <person name="Kreis M."/>
            <person name="Delseny M."/>
            <person name="Puigdomenech P."/>
            <person name="Watson M."/>
            <person name="Schmidtheini T."/>
            <person name="Reichert B."/>
            <person name="Portetelle D."/>
            <person name="Perez-Alonso M."/>
            <person name="Boutry M."/>
            <person name="Bancroft I."/>
            <person name="Vos P."/>
            <person name="Hoheisel J."/>
            <person name="Zimmermann W."/>
            <person name="Wedler H."/>
            <person name="Ridley P."/>
            <person name="Langham S.-A."/>
            <person name="McCullagh B."/>
            <person name="Bilham L."/>
            <person name="Robben J."/>
            <person name="van der Schueren J."/>
            <person name="Grymonprez B."/>
            <person name="Chuang Y.-J."/>
            <person name="Vandenbussche F."/>
            <person name="Braeken M."/>
            <person name="Weltjens I."/>
            <person name="Voet M."/>
            <person name="Bastiaens I."/>
            <person name="Aert R."/>
            <person name="Defoor E."/>
            <person name="Weitzenegger T."/>
            <person name="Bothe G."/>
            <person name="Ramsperger U."/>
            <person name="Hilbert H."/>
            <person name="Braun M."/>
            <person name="Holzer E."/>
            <person name="Brandt A."/>
            <person name="Peters S."/>
            <person name="van Staveren M."/>
            <person name="Dirkse W."/>
            <person name="Mooijman P."/>
            <person name="Klein Lankhorst R."/>
            <person name="Rose M."/>
            <person name="Hauf J."/>
            <person name="Koetter P."/>
            <person name="Berneiser S."/>
            <person name="Hempel S."/>
            <person name="Feldpausch M."/>
            <person name="Lamberth S."/>
            <person name="Van den Daele H."/>
            <person name="De Keyser A."/>
            <person name="Buysshaert C."/>
            <person name="Gielen J."/>
            <person name="Villarroel R."/>
            <person name="De Clercq R."/>
            <person name="van Montagu M."/>
            <person name="Rogers J."/>
            <person name="Cronin A."/>
            <person name="Quail M.A."/>
            <person name="Bray-Allen S."/>
            <person name="Clark L."/>
            <person name="Doggett J."/>
            <person name="Hall S."/>
            <person name="Kay M."/>
            <person name="Lennard N."/>
            <person name="McLay K."/>
            <person name="Mayes R."/>
            <person name="Pettett A."/>
            <person name="Rajandream M.A."/>
            <person name="Lyne M."/>
            <person name="Benes V."/>
            <person name="Rechmann S."/>
            <person name="Borkova D."/>
            <person name="Bloecker H."/>
            <person name="Scharfe M."/>
            <person name="Grimm M."/>
            <person name="Loehnert T.-H."/>
            <person name="Dose S."/>
            <person name="de Haan M."/>
            <person name="Maarse A.C."/>
            <person name="Schaefer M."/>
            <person name="Mueller-Auer S."/>
            <person name="Gabel C."/>
            <person name="Fuchs M."/>
            <person name="Fartmann B."/>
            <person name="Granderath K."/>
            <person name="Dauner D."/>
            <person name="Herzl A."/>
            <person name="Neumann S."/>
            <person name="Argiriou A."/>
            <person name="Vitale D."/>
            <person name="Liguori R."/>
            <person name="Piravandi E."/>
            <person name="Massenet O."/>
            <person name="Quigley F."/>
            <person name="Clabauld G."/>
            <person name="Muendlein A."/>
            <person name="Felber R."/>
            <person name="Schnabl S."/>
            <person name="Hiller R."/>
            <person name="Schmidt W."/>
            <person name="Lecharny A."/>
            <person name="Aubourg S."/>
            <person name="Chefdor F."/>
            <person name="Cooke R."/>
            <person name="Berger C."/>
            <person name="Monfort A."/>
            <person name="Casacuberta E."/>
            <person name="Gibbons T."/>
            <person name="Weber N."/>
            <person name="Vandenbol M."/>
            <person name="Bargues M."/>
            <person name="Terol J."/>
            <person name="Torres A."/>
            <person name="Perez-Perez A."/>
            <person name="Purnelle B."/>
            <person name="Bent E."/>
            <person name="Johnson S."/>
            <person name="Tacon D."/>
            <person name="Jesse T."/>
            <person name="Heijnen L."/>
            <person name="Schwarz S."/>
            <person name="Scholler P."/>
            <person name="Heber S."/>
            <person name="Francs P."/>
            <person name="Bielke C."/>
            <person name="Frishman D."/>
            <person name="Haase D."/>
            <person name="Lemcke K."/>
            <person name="Mewes H.-W."/>
            <person name="Stocker S."/>
            <person name="Zaccaria P."/>
            <person name="Bevan M."/>
            <person name="Wilson R.K."/>
            <person name="de la Bastide M."/>
            <person name="Habermann K."/>
            <person name="Parnell L."/>
            <person name="Dedhia N."/>
            <person name="Gnoj L."/>
            <person name="Schutz K."/>
            <person name="Huang E."/>
            <person name="Spiegel L."/>
            <person name="Sekhon M."/>
            <person name="Murray J."/>
            <person name="Sheet P."/>
            <person name="Cordes M."/>
            <person name="Abu-Threideh J."/>
            <person name="Stoneking T."/>
            <person name="Kalicki J."/>
            <person name="Graves T."/>
            <person name="Harmon G."/>
            <person name="Edwards J."/>
            <person name="Latreille P."/>
            <person name="Courtney L."/>
            <person name="Cloud J."/>
            <person name="Abbott A."/>
            <person name="Scott K."/>
            <person name="Johnson D."/>
            <person name="Minx P."/>
            <person name="Bentley D."/>
            <person name="Fulton B."/>
            <person name="Miller N."/>
            <person name="Greco T."/>
            <person name="Kemp K."/>
            <person name="Kramer J."/>
            <person name="Fulton L."/>
            <person name="Mardis E."/>
            <person name="Dante M."/>
            <person name="Pepin K."/>
            <person name="Hillier L.W."/>
            <person name="Nelson J."/>
            <person name="Spieth J."/>
            <person name="Ryan E."/>
            <person name="Andrews S."/>
            <person name="Geisel C."/>
            <person name="Layman D."/>
            <person name="Du H."/>
            <person name="Ali J."/>
            <person name="Berghoff A."/>
            <person name="Jones K."/>
            <person name="Drone K."/>
            <person name="Cotton M."/>
            <person name="Joshu C."/>
            <person name="Antonoiu B."/>
            <person name="Zidanic M."/>
            <person name="Strong C."/>
            <person name="Sun H."/>
            <person name="Lamar B."/>
            <person name="Yordan C."/>
            <person name="Ma P."/>
            <person name="Zhong J."/>
            <person name="Preston R."/>
            <person name="Vil D."/>
            <person name="Shekher M."/>
            <person name="Matero A."/>
            <person name="Shah R."/>
            <person name="Swaby I.K."/>
            <person name="O'Shaughnessy A."/>
            <person name="Rodriguez M."/>
            <person name="Hoffman J."/>
            <person name="Till S."/>
            <person name="Granat S."/>
            <person name="Shohdy N."/>
            <person name="Hasegawa A."/>
            <person name="Hameed A."/>
            <person name="Lodhi M."/>
            <person name="Johnson A."/>
            <person name="Chen E."/>
            <person name="Marra M.A."/>
            <person name="Martienssen R."/>
            <person name="McCombie W.R."/>
        </authorList>
    </citation>
    <scope>NUCLEOTIDE SEQUENCE [LARGE SCALE GENOMIC DNA]</scope>
    <source>
        <strain>cv. Columbia</strain>
    </source>
</reference>
<reference key="5">
    <citation type="journal article" date="2017" name="Plant J.">
        <title>Araport11: a complete reannotation of the Arabidopsis thaliana reference genome.</title>
        <authorList>
            <person name="Cheng C.Y."/>
            <person name="Krishnakumar V."/>
            <person name="Chan A.P."/>
            <person name="Thibaud-Nissen F."/>
            <person name="Schobel S."/>
            <person name="Town C.D."/>
        </authorList>
    </citation>
    <scope>GENOME REANNOTATION</scope>
    <source>
        <strain>cv. Columbia</strain>
    </source>
</reference>
<reference key="6">
    <citation type="submission" date="2004-09" db="EMBL/GenBank/DDBJ databases">
        <title>Large-scale analysis of RIKEN Arabidopsis full-length (RAFL) cDNAs.</title>
        <authorList>
            <person name="Totoki Y."/>
            <person name="Seki M."/>
            <person name="Ishida J."/>
            <person name="Nakajima M."/>
            <person name="Enju A."/>
            <person name="Kamiya A."/>
            <person name="Narusaka M."/>
            <person name="Shin-i T."/>
            <person name="Nakagawa M."/>
            <person name="Sakamoto N."/>
            <person name="Oishi K."/>
            <person name="Kohara Y."/>
            <person name="Kobayashi M."/>
            <person name="Toyoda A."/>
            <person name="Sakaki Y."/>
            <person name="Sakurai T."/>
            <person name="Iida K."/>
            <person name="Akiyama K."/>
            <person name="Satou M."/>
            <person name="Toyoda T."/>
            <person name="Konagaya A."/>
            <person name="Carninci P."/>
            <person name="Kawai J."/>
            <person name="Hayashizaki Y."/>
            <person name="Shinozaki K."/>
        </authorList>
    </citation>
    <scope>NUCLEOTIDE SEQUENCE [LARGE SCALE MRNA]</scope>
    <source>
        <strain>cv. Columbia</strain>
    </source>
</reference>
<reference key="7">
    <citation type="journal article" date="2004" name="Plant Physiol.">
        <title>Calcium sensors and their interacting protein kinases: genomics of the Arabidopsis and rice CBL-CIPK signaling networks.</title>
        <authorList>
            <person name="Kolukisaoglu U."/>
            <person name="Weinl S."/>
            <person name="Blazevic D."/>
            <person name="Batistic O."/>
            <person name="Kudla J."/>
        </authorList>
    </citation>
    <scope>GENE FAMILY</scope>
</reference>
<reference key="8">
    <citation type="journal article" date="2010" name="Plant J.">
        <title>CBL-mediated targeting of CIPKs facilitates the decoding of calcium signals emanating from distinct cellular stores.</title>
        <authorList>
            <person name="Batistic O."/>
            <person name="Waadt R."/>
            <person name="Steinhorst L."/>
            <person name="Held K."/>
            <person name="Kudla J."/>
        </authorList>
    </citation>
    <scope>SUBCELLULAR LOCATION</scope>
</reference>
<reference key="9">
    <citation type="journal article" date="2013" name="Plant Cell">
        <title>Protein S-acyl transferase10 is critical for development and salt tolerance in Arabidopsis.</title>
        <authorList>
            <person name="Zhou L.Z."/>
            <person name="Li S."/>
            <person name="Feng Q.N."/>
            <person name="Zhang Y.L."/>
            <person name="Zhao X."/>
            <person name="Zeng Y.L."/>
            <person name="Wang H."/>
            <person name="Jiang L."/>
            <person name="Zhang Y."/>
        </authorList>
    </citation>
    <scope>SUBCELLULAR LOCATION</scope>
    <scope>PALMITOYLATION</scope>
</reference>
<feature type="chain" id="PRO_0000073507" description="Calcineurin B-like protein 6">
    <location>
        <begin position="1"/>
        <end position="226"/>
    </location>
</feature>
<feature type="domain" description="EF-hand 1" evidence="5">
    <location>
        <begin position="20"/>
        <end position="75"/>
    </location>
</feature>
<feature type="domain" description="EF-hand 2" evidence="2">
    <location>
        <begin position="76"/>
        <end position="111"/>
    </location>
</feature>
<feature type="domain" description="EF-hand 3" evidence="2">
    <location>
        <begin position="113"/>
        <end position="148"/>
    </location>
</feature>
<feature type="domain" description="EF-hand 4" evidence="2">
    <location>
        <begin position="157"/>
        <end position="192"/>
    </location>
</feature>
<feature type="site" description="Involved in dimerization" evidence="1">
    <location>
        <position position="149"/>
    </location>
</feature>
<feature type="sequence conflict" description="In Ref. 2; AAK26840." evidence="5" ref="2">
    <original>H</original>
    <variation>Y</variation>
    <location>
        <position position="214"/>
    </location>
</feature>
<dbReference type="EMBL" id="AF192884">
    <property type="protein sequence ID" value="AAG28400.1"/>
    <property type="molecule type" value="mRNA"/>
</dbReference>
<dbReference type="EMBL" id="AF339142">
    <property type="protein sequence ID" value="AAK26840.1"/>
    <property type="status" value="ALT_FRAME"/>
    <property type="molecule type" value="mRNA"/>
</dbReference>
<dbReference type="EMBL" id="Z97341">
    <property type="protein sequence ID" value="CAB10412.1"/>
    <property type="status" value="ALT_SEQ"/>
    <property type="molecule type" value="Genomic_DNA"/>
</dbReference>
<dbReference type="EMBL" id="AL161543">
    <property type="protein sequence ID" value="CAB78677.1"/>
    <property type="status" value="ALT_SEQ"/>
    <property type="molecule type" value="Genomic_DNA"/>
</dbReference>
<dbReference type="EMBL" id="CP002687">
    <property type="protein sequence ID" value="AEE83734.1"/>
    <property type="molecule type" value="Genomic_DNA"/>
</dbReference>
<dbReference type="EMBL" id="CP002687">
    <property type="protein sequence ID" value="ANM66942.1"/>
    <property type="molecule type" value="Genomic_DNA"/>
</dbReference>
<dbReference type="EMBL" id="AK176189">
    <property type="protein sequence ID" value="BAD43952.1"/>
    <property type="molecule type" value="mRNA"/>
</dbReference>
<dbReference type="PIR" id="B71430">
    <property type="entry name" value="B71430"/>
</dbReference>
<dbReference type="RefSeq" id="NP_001328805.1">
    <property type="nucleotide sequence ID" value="NM_001341098.1"/>
</dbReference>
<dbReference type="RefSeq" id="NP_567492.1">
    <property type="nucleotide sequence ID" value="NM_117730.3"/>
</dbReference>
<dbReference type="SMR" id="Q9C5P6"/>
<dbReference type="BioGRID" id="12623">
    <property type="interactions" value="4"/>
</dbReference>
<dbReference type="FunCoup" id="Q9C5P6">
    <property type="interactions" value="384"/>
</dbReference>
<dbReference type="IntAct" id="Q9C5P6">
    <property type="interactions" value="4"/>
</dbReference>
<dbReference type="STRING" id="3702.Q9C5P6"/>
<dbReference type="iPTMnet" id="Q9C5P6"/>
<dbReference type="PaxDb" id="3702-AT4G16350.1"/>
<dbReference type="ProteomicsDB" id="220287"/>
<dbReference type="EnsemblPlants" id="AT4G16350.1">
    <property type="protein sequence ID" value="AT4G16350.1"/>
    <property type="gene ID" value="AT4G16350"/>
</dbReference>
<dbReference type="EnsemblPlants" id="AT4G16350.2">
    <property type="protein sequence ID" value="AT4G16350.2"/>
    <property type="gene ID" value="AT4G16350"/>
</dbReference>
<dbReference type="GeneID" id="827330"/>
<dbReference type="Gramene" id="AT4G16350.1">
    <property type="protein sequence ID" value="AT4G16350.1"/>
    <property type="gene ID" value="AT4G16350"/>
</dbReference>
<dbReference type="Gramene" id="AT4G16350.2">
    <property type="protein sequence ID" value="AT4G16350.2"/>
    <property type="gene ID" value="AT4G16350"/>
</dbReference>
<dbReference type="KEGG" id="ath:AT4G16350"/>
<dbReference type="Araport" id="AT4G16350"/>
<dbReference type="TAIR" id="AT4G16350">
    <property type="gene designation" value="CBL6"/>
</dbReference>
<dbReference type="eggNOG" id="KOG0034">
    <property type="taxonomic scope" value="Eukaryota"/>
</dbReference>
<dbReference type="HOGENOM" id="CLU_061288_21_0_1"/>
<dbReference type="InParanoid" id="Q9C5P6"/>
<dbReference type="OMA" id="FLLTCCD"/>
<dbReference type="PhylomeDB" id="Q9C5P6"/>
<dbReference type="PRO" id="PR:Q9C5P6"/>
<dbReference type="Proteomes" id="UP000006548">
    <property type="component" value="Chromosome 4"/>
</dbReference>
<dbReference type="ExpressionAtlas" id="Q9C5P6">
    <property type="expression patterns" value="baseline and differential"/>
</dbReference>
<dbReference type="GO" id="GO:0005829">
    <property type="term" value="C:cytosol"/>
    <property type="evidence" value="ECO:0007005"/>
    <property type="project" value="TAIR"/>
</dbReference>
<dbReference type="GO" id="GO:0005774">
    <property type="term" value="C:vacuolar membrane"/>
    <property type="evidence" value="ECO:0007669"/>
    <property type="project" value="UniProtKB-SubCell"/>
</dbReference>
<dbReference type="GO" id="GO:0005509">
    <property type="term" value="F:calcium ion binding"/>
    <property type="evidence" value="ECO:0000250"/>
    <property type="project" value="TAIR"/>
</dbReference>
<dbReference type="GO" id="GO:0019900">
    <property type="term" value="F:kinase binding"/>
    <property type="evidence" value="ECO:0007669"/>
    <property type="project" value="InterPro"/>
</dbReference>
<dbReference type="GO" id="GO:0019722">
    <property type="term" value="P:calcium-mediated signaling"/>
    <property type="evidence" value="ECO:0000250"/>
    <property type="project" value="TAIR"/>
</dbReference>
<dbReference type="CDD" id="cd00051">
    <property type="entry name" value="EFh"/>
    <property type="match status" value="1"/>
</dbReference>
<dbReference type="FunFam" id="1.10.238.10:FF:000073">
    <property type="entry name" value="calcineurin B-like protein 3"/>
    <property type="match status" value="1"/>
</dbReference>
<dbReference type="Gene3D" id="1.10.238.10">
    <property type="entry name" value="EF-hand"/>
    <property type="match status" value="1"/>
</dbReference>
<dbReference type="InterPro" id="IPR045198">
    <property type="entry name" value="CNBL1-10"/>
</dbReference>
<dbReference type="InterPro" id="IPR011992">
    <property type="entry name" value="EF-hand-dom_pair"/>
</dbReference>
<dbReference type="InterPro" id="IPR002048">
    <property type="entry name" value="EF_hand_dom"/>
</dbReference>
<dbReference type="PANTHER" id="PTHR23056">
    <property type="entry name" value="CALCINEURIN B"/>
    <property type="match status" value="1"/>
</dbReference>
<dbReference type="PANTHER" id="PTHR23056:SF141">
    <property type="entry name" value="CALCINEURIN B-LIKE PROTEIN 6"/>
    <property type="match status" value="1"/>
</dbReference>
<dbReference type="Pfam" id="PF13499">
    <property type="entry name" value="EF-hand_7"/>
    <property type="match status" value="1"/>
</dbReference>
<dbReference type="PRINTS" id="PR00450">
    <property type="entry name" value="RECOVERIN"/>
</dbReference>
<dbReference type="SMART" id="SM00054">
    <property type="entry name" value="EFh"/>
    <property type="match status" value="3"/>
</dbReference>
<dbReference type="SUPFAM" id="SSF47473">
    <property type="entry name" value="EF-hand"/>
    <property type="match status" value="1"/>
</dbReference>
<dbReference type="PROSITE" id="PS50222">
    <property type="entry name" value="EF_HAND_2"/>
    <property type="match status" value="3"/>
</dbReference>